<organism>
    <name type="scientific">Methylobacterium sp. (strain 4-46)</name>
    <dbReference type="NCBI Taxonomy" id="426117"/>
    <lineage>
        <taxon>Bacteria</taxon>
        <taxon>Pseudomonadati</taxon>
        <taxon>Pseudomonadota</taxon>
        <taxon>Alphaproteobacteria</taxon>
        <taxon>Hyphomicrobiales</taxon>
        <taxon>Methylobacteriaceae</taxon>
        <taxon>Methylobacterium</taxon>
    </lineage>
</organism>
<proteinExistence type="inferred from homology"/>
<name>Y3939_METS4</name>
<protein>
    <recommendedName>
        <fullName evidence="1">UPF0235 protein M446_3939</fullName>
    </recommendedName>
</protein>
<accession>B0UH52</accession>
<dbReference type="EMBL" id="CP000943">
    <property type="protein sequence ID" value="ACA18305.1"/>
    <property type="molecule type" value="Genomic_DNA"/>
</dbReference>
<dbReference type="RefSeq" id="WP_012333701.1">
    <property type="nucleotide sequence ID" value="NC_010511.1"/>
</dbReference>
<dbReference type="SMR" id="B0UH52"/>
<dbReference type="STRING" id="426117.M446_3939"/>
<dbReference type="KEGG" id="met:M446_3939"/>
<dbReference type="eggNOG" id="COG1872">
    <property type="taxonomic scope" value="Bacteria"/>
</dbReference>
<dbReference type="HOGENOM" id="CLU_130694_3_0_5"/>
<dbReference type="Gene3D" id="3.30.1200.10">
    <property type="entry name" value="YggU-like"/>
    <property type="match status" value="1"/>
</dbReference>
<dbReference type="HAMAP" id="MF_00634">
    <property type="entry name" value="UPF0235"/>
    <property type="match status" value="1"/>
</dbReference>
<dbReference type="InterPro" id="IPR003746">
    <property type="entry name" value="DUF167"/>
</dbReference>
<dbReference type="InterPro" id="IPR036591">
    <property type="entry name" value="YggU-like_sf"/>
</dbReference>
<dbReference type="NCBIfam" id="TIGR00251">
    <property type="entry name" value="DUF167 family protein"/>
    <property type="match status" value="1"/>
</dbReference>
<dbReference type="NCBIfam" id="NF002348">
    <property type="entry name" value="PRK01310.1"/>
    <property type="match status" value="1"/>
</dbReference>
<dbReference type="Pfam" id="PF02594">
    <property type="entry name" value="DUF167"/>
    <property type="match status" value="1"/>
</dbReference>
<dbReference type="SMART" id="SM01152">
    <property type="entry name" value="DUF167"/>
    <property type="match status" value="1"/>
</dbReference>
<dbReference type="SUPFAM" id="SSF69786">
    <property type="entry name" value="YggU-like"/>
    <property type="match status" value="1"/>
</dbReference>
<comment type="similarity">
    <text evidence="1">Belongs to the UPF0235 family.</text>
</comment>
<evidence type="ECO:0000255" key="1">
    <source>
        <dbReference type="HAMAP-Rule" id="MF_00634"/>
    </source>
</evidence>
<reference key="1">
    <citation type="submission" date="2008-02" db="EMBL/GenBank/DDBJ databases">
        <title>Complete sequence of chromosome of Methylobacterium sp. 4-46.</title>
        <authorList>
            <consortium name="US DOE Joint Genome Institute"/>
            <person name="Copeland A."/>
            <person name="Lucas S."/>
            <person name="Lapidus A."/>
            <person name="Glavina del Rio T."/>
            <person name="Dalin E."/>
            <person name="Tice H."/>
            <person name="Bruce D."/>
            <person name="Goodwin L."/>
            <person name="Pitluck S."/>
            <person name="Chertkov O."/>
            <person name="Brettin T."/>
            <person name="Detter J.C."/>
            <person name="Han C."/>
            <person name="Kuske C.R."/>
            <person name="Schmutz J."/>
            <person name="Larimer F."/>
            <person name="Land M."/>
            <person name="Hauser L."/>
            <person name="Kyrpides N."/>
            <person name="Ivanova N."/>
            <person name="Marx C.J."/>
            <person name="Richardson P."/>
        </authorList>
    </citation>
    <scope>NUCLEOTIDE SEQUENCE [LARGE SCALE GENOMIC DNA]</scope>
    <source>
        <strain>4-46</strain>
    </source>
</reference>
<feature type="chain" id="PRO_1000130695" description="UPF0235 protein M446_3939">
    <location>
        <begin position="1"/>
        <end position="104"/>
    </location>
</feature>
<gene>
    <name type="ordered locus">M446_3939</name>
</gene>
<sequence>MTRPWRLLTDGLEVRVRATPRGGRDAVEGIETRADGLPVLKVRVRAAPEDGAANAAIRAVLAEALGCPARAVTLAAGATARVKLFRVAGDGQALAARIGALLGP</sequence>